<name>CATA_ACICA</name>
<reference evidence="2" key="1">
    <citation type="journal article" date="2004" name="Eng. Life Sci.">
        <title>Growth on phenol at chemostress levels amplifies the expression of the phenol degradation pathway in Acinetobacter calcoaceticus.</title>
        <authorList>
            <person name="Benndorf D."/>
            <person name="Loffhagen N."/>
            <person name="Hartig C."/>
            <person name="Babel W."/>
        </authorList>
    </citation>
    <scope>PROTEIN SEQUENCE</scope>
    <scope>INDUCTION</scope>
    <source>
        <strain>69-V</strain>
    </source>
</reference>
<accession>P83715</accession>
<protein>
    <recommendedName>
        <fullName>Catechol 1,2-dioxygenase</fullName>
        <ecNumber>1.13.11.1</ecNumber>
    </recommendedName>
</protein>
<organism evidence="2">
    <name type="scientific">Acinetobacter calcoaceticus</name>
    <dbReference type="NCBI Taxonomy" id="471"/>
    <lineage>
        <taxon>Bacteria</taxon>
        <taxon>Pseudomonadati</taxon>
        <taxon>Pseudomonadota</taxon>
        <taxon>Gammaproteobacteria</taxon>
        <taxon>Moraxellales</taxon>
        <taxon>Moraxellaceae</taxon>
        <taxon>Acinetobacter</taxon>
        <taxon>Acinetobacter calcoaceticus/baumannii complex</taxon>
    </lineage>
</organism>
<sequence>MNXQQIDMLVKQLN</sequence>
<comment type="catalytic activity">
    <reaction evidence="2">
        <text>catechol + O2 = cis,cis-muconate + 2 H(+)</text>
        <dbReference type="Rhea" id="RHEA:23852"/>
        <dbReference type="ChEBI" id="CHEBI:15378"/>
        <dbReference type="ChEBI" id="CHEBI:15379"/>
        <dbReference type="ChEBI" id="CHEBI:18135"/>
        <dbReference type="ChEBI" id="CHEBI:32379"/>
        <dbReference type="EC" id="1.13.11.1"/>
    </reaction>
</comment>
<comment type="cofactor">
    <cofactor>
        <name>Fe(3+)</name>
        <dbReference type="ChEBI" id="CHEBI:29034"/>
    </cofactor>
    <text>Binds 1 Fe(3+) ion per subunit.</text>
</comment>
<comment type="pathway">
    <text>Aromatic compound metabolism; beta-ketoadipate pathway; 5-oxo-4,5-dihydro-2-furylacetate from catechol: step 1/3.</text>
</comment>
<comment type="induction">
    <text evidence="1 2">By phenol.</text>
</comment>
<comment type="similarity">
    <text evidence="2">Belongs to the intradiol ring-cleavage dioxygenase family.</text>
</comment>
<dbReference type="EC" id="1.13.11.1"/>
<dbReference type="UniPathway" id="UPA00157">
    <property type="reaction ID" value="UER00258"/>
</dbReference>
<dbReference type="GO" id="GO:0018576">
    <property type="term" value="F:catechol 1,2-dioxygenase activity"/>
    <property type="evidence" value="ECO:0007669"/>
    <property type="project" value="UniProtKB-EC"/>
</dbReference>
<dbReference type="GO" id="GO:0042952">
    <property type="term" value="P:beta-ketoadipate pathway"/>
    <property type="evidence" value="ECO:0007669"/>
    <property type="project" value="UniProtKB-UniPathway"/>
</dbReference>
<proteinExistence type="evidence at protein level"/>
<evidence type="ECO:0000269" key="1">
    <source ref="1"/>
</evidence>
<evidence type="ECO:0000305" key="2"/>
<feature type="chain" id="PRO_0000085079" description="Catechol 1,2-dioxygenase">
    <location>
        <begin position="1"/>
        <end position="14" status="greater than"/>
    </location>
</feature>
<feature type="non-terminal residue" evidence="2">
    <location>
        <position position="14"/>
    </location>
</feature>
<keyword id="KW-0058">Aromatic hydrocarbons catabolism</keyword>
<keyword id="KW-0223">Dioxygenase</keyword>
<keyword id="KW-0903">Direct protein sequencing</keyword>
<keyword id="KW-0408">Iron</keyword>
<keyword id="KW-0560">Oxidoreductase</keyword>